<keyword id="KW-0066">ATP synthesis</keyword>
<keyword id="KW-0997">Cell inner membrane</keyword>
<keyword id="KW-1003">Cell membrane</keyword>
<keyword id="KW-0138">CF(0)</keyword>
<keyword id="KW-0375">Hydrogen ion transport</keyword>
<keyword id="KW-0406">Ion transport</keyword>
<keyword id="KW-0472">Membrane</keyword>
<keyword id="KW-0812">Transmembrane</keyword>
<keyword id="KW-1133">Transmembrane helix</keyword>
<keyword id="KW-0813">Transport</keyword>
<evidence type="ECO:0000255" key="1">
    <source>
        <dbReference type="HAMAP-Rule" id="MF_01398"/>
    </source>
</evidence>
<sequence length="156" mass="16990">MNINLTLIGQAIAFAFFVAFCMKFVWPPLINAISERQRKIADGLNAAEKAKADLADAQAQVKQELDAAKAQAAQLIEQANRRAAQLIEEARTQAAAEGERIRQQAKEAVDQEINSAREELRQQVAALAVTGAEKILNQQVDAEAHNAMLSQLAAKL</sequence>
<protein>
    <recommendedName>
        <fullName evidence="1">ATP synthase subunit b</fullName>
    </recommendedName>
    <alternativeName>
        <fullName evidence="1">ATP synthase F(0) sector subunit b</fullName>
    </alternativeName>
    <alternativeName>
        <fullName evidence="1">ATPase subunit I</fullName>
    </alternativeName>
    <alternativeName>
        <fullName evidence="1">F-type ATPase subunit b</fullName>
        <shortName evidence="1">F-ATPase subunit b</shortName>
    </alternativeName>
</protein>
<reference key="1">
    <citation type="journal article" date="2008" name="Antimicrob. Agents Chemother.">
        <title>Whole-genome pyrosequencing of an epidemic multidrug-resistant Acinetobacter baumannii strain belonging to the European clone II group.</title>
        <authorList>
            <person name="Iacono M."/>
            <person name="Villa L."/>
            <person name="Fortini D."/>
            <person name="Bordoni R."/>
            <person name="Imperi F."/>
            <person name="Bonnal R.J."/>
            <person name="Sicheritz-Ponten T."/>
            <person name="De Bellis G."/>
            <person name="Visca P."/>
            <person name="Cassone A."/>
            <person name="Carattoli A."/>
        </authorList>
    </citation>
    <scope>NUCLEOTIDE SEQUENCE [LARGE SCALE GENOMIC DNA]</scope>
    <source>
        <strain>ACICU</strain>
    </source>
</reference>
<organism>
    <name type="scientific">Acinetobacter baumannii (strain ACICU)</name>
    <dbReference type="NCBI Taxonomy" id="405416"/>
    <lineage>
        <taxon>Bacteria</taxon>
        <taxon>Pseudomonadati</taxon>
        <taxon>Pseudomonadota</taxon>
        <taxon>Gammaproteobacteria</taxon>
        <taxon>Moraxellales</taxon>
        <taxon>Moraxellaceae</taxon>
        <taxon>Acinetobacter</taxon>
        <taxon>Acinetobacter calcoaceticus/baumannii complex</taxon>
    </lineage>
</organism>
<gene>
    <name evidence="1" type="primary">atpF</name>
    <name type="ordered locus">ACICU_00174</name>
</gene>
<proteinExistence type="inferred from homology"/>
<dbReference type="EMBL" id="CP000863">
    <property type="protein sequence ID" value="ACC55486.1"/>
    <property type="molecule type" value="Genomic_DNA"/>
</dbReference>
<dbReference type="RefSeq" id="WP_001024691.1">
    <property type="nucleotide sequence ID" value="NZ_CP031380.1"/>
</dbReference>
<dbReference type="SMR" id="B2I0Z8"/>
<dbReference type="KEGG" id="abc:ACICU_00174"/>
<dbReference type="HOGENOM" id="CLU_079215_4_5_6"/>
<dbReference type="Proteomes" id="UP000008839">
    <property type="component" value="Chromosome"/>
</dbReference>
<dbReference type="GO" id="GO:0005886">
    <property type="term" value="C:plasma membrane"/>
    <property type="evidence" value="ECO:0007669"/>
    <property type="project" value="UniProtKB-SubCell"/>
</dbReference>
<dbReference type="GO" id="GO:0045259">
    <property type="term" value="C:proton-transporting ATP synthase complex"/>
    <property type="evidence" value="ECO:0007669"/>
    <property type="project" value="UniProtKB-KW"/>
</dbReference>
<dbReference type="GO" id="GO:0046933">
    <property type="term" value="F:proton-transporting ATP synthase activity, rotational mechanism"/>
    <property type="evidence" value="ECO:0007669"/>
    <property type="project" value="UniProtKB-UniRule"/>
</dbReference>
<dbReference type="GO" id="GO:0046961">
    <property type="term" value="F:proton-transporting ATPase activity, rotational mechanism"/>
    <property type="evidence" value="ECO:0007669"/>
    <property type="project" value="TreeGrafter"/>
</dbReference>
<dbReference type="CDD" id="cd06503">
    <property type="entry name" value="ATP-synt_Fo_b"/>
    <property type="match status" value="1"/>
</dbReference>
<dbReference type="FunFam" id="1.20.5.620:FF:000001">
    <property type="entry name" value="ATP synthase subunit b"/>
    <property type="match status" value="1"/>
</dbReference>
<dbReference type="Gene3D" id="6.10.250.1580">
    <property type="match status" value="1"/>
</dbReference>
<dbReference type="HAMAP" id="MF_01398">
    <property type="entry name" value="ATP_synth_b_bprime"/>
    <property type="match status" value="1"/>
</dbReference>
<dbReference type="InterPro" id="IPR028987">
    <property type="entry name" value="ATP_synth_B-like_membr_sf"/>
</dbReference>
<dbReference type="InterPro" id="IPR002146">
    <property type="entry name" value="ATP_synth_b/b'su_bac/chlpt"/>
</dbReference>
<dbReference type="InterPro" id="IPR005864">
    <property type="entry name" value="ATP_synth_F0_bsu_bac"/>
</dbReference>
<dbReference type="InterPro" id="IPR050059">
    <property type="entry name" value="ATP_synthase_B_chain"/>
</dbReference>
<dbReference type="NCBIfam" id="TIGR01144">
    <property type="entry name" value="ATP_synt_b"/>
    <property type="match status" value="1"/>
</dbReference>
<dbReference type="NCBIfam" id="NF004411">
    <property type="entry name" value="PRK05759.1-2"/>
    <property type="match status" value="1"/>
</dbReference>
<dbReference type="PANTHER" id="PTHR33445:SF1">
    <property type="entry name" value="ATP SYNTHASE SUBUNIT B"/>
    <property type="match status" value="1"/>
</dbReference>
<dbReference type="PANTHER" id="PTHR33445">
    <property type="entry name" value="ATP SYNTHASE SUBUNIT B', CHLOROPLASTIC"/>
    <property type="match status" value="1"/>
</dbReference>
<dbReference type="Pfam" id="PF00430">
    <property type="entry name" value="ATP-synt_B"/>
    <property type="match status" value="1"/>
</dbReference>
<dbReference type="SUPFAM" id="SSF81573">
    <property type="entry name" value="F1F0 ATP synthase subunit B, membrane domain"/>
    <property type="match status" value="1"/>
</dbReference>
<comment type="function">
    <text evidence="1">F(1)F(0) ATP synthase produces ATP from ADP in the presence of a proton or sodium gradient. F-type ATPases consist of two structural domains, F(1) containing the extramembraneous catalytic core and F(0) containing the membrane proton channel, linked together by a central stalk and a peripheral stalk. During catalysis, ATP synthesis in the catalytic domain of F(1) is coupled via a rotary mechanism of the central stalk subunits to proton translocation.</text>
</comment>
<comment type="function">
    <text evidence="1">Component of the F(0) channel, it forms part of the peripheral stalk, linking F(1) to F(0).</text>
</comment>
<comment type="subunit">
    <text evidence="1">F-type ATPases have 2 components, F(1) - the catalytic core - and F(0) - the membrane proton channel. F(1) has five subunits: alpha(3), beta(3), gamma(1), delta(1), epsilon(1). F(0) has three main subunits: a(1), b(2) and c(10-14). The alpha and beta chains form an alternating ring which encloses part of the gamma chain. F(1) is attached to F(0) by a central stalk formed by the gamma and epsilon chains, while a peripheral stalk is formed by the delta and b chains.</text>
</comment>
<comment type="subcellular location">
    <subcellularLocation>
        <location evidence="1">Cell inner membrane</location>
        <topology evidence="1">Single-pass membrane protein</topology>
    </subcellularLocation>
</comment>
<comment type="similarity">
    <text evidence="1">Belongs to the ATPase B chain family.</text>
</comment>
<name>ATPF_ACIBC</name>
<accession>B2I0Z8</accession>
<feature type="chain" id="PRO_0000368290" description="ATP synthase subunit b">
    <location>
        <begin position="1"/>
        <end position="156"/>
    </location>
</feature>
<feature type="transmembrane region" description="Helical" evidence="1">
    <location>
        <begin position="5"/>
        <end position="25"/>
    </location>
</feature>